<dbReference type="EMBL" id="AP009178">
    <property type="protein sequence ID" value="BAF69252.1"/>
    <property type="molecule type" value="Genomic_DNA"/>
</dbReference>
<dbReference type="RefSeq" id="WP_011979678.1">
    <property type="nucleotide sequence ID" value="NC_009662.1"/>
</dbReference>
<dbReference type="SMR" id="A6Q193"/>
<dbReference type="FunCoup" id="A6Q193">
    <property type="interactions" value="26"/>
</dbReference>
<dbReference type="KEGG" id="nis:NIS_0137"/>
<dbReference type="eggNOG" id="COG1671">
    <property type="taxonomic scope" value="Bacteria"/>
</dbReference>
<dbReference type="HOGENOM" id="CLU_106619_2_1_7"/>
<dbReference type="InParanoid" id="A6Q193"/>
<dbReference type="OrthoDB" id="9798918at2"/>
<dbReference type="Proteomes" id="UP000001118">
    <property type="component" value="Chromosome"/>
</dbReference>
<dbReference type="HAMAP" id="MF_00489">
    <property type="entry name" value="UPF0178"/>
    <property type="match status" value="1"/>
</dbReference>
<dbReference type="InterPro" id="IPR003791">
    <property type="entry name" value="UPF0178"/>
</dbReference>
<dbReference type="NCBIfam" id="NF001095">
    <property type="entry name" value="PRK00124.1"/>
    <property type="match status" value="1"/>
</dbReference>
<dbReference type="PANTHER" id="PTHR35146">
    <property type="entry name" value="UPF0178 PROTEIN YAII"/>
    <property type="match status" value="1"/>
</dbReference>
<dbReference type="PANTHER" id="PTHR35146:SF1">
    <property type="entry name" value="UPF0178 PROTEIN YAII"/>
    <property type="match status" value="1"/>
</dbReference>
<dbReference type="Pfam" id="PF02639">
    <property type="entry name" value="DUF188"/>
    <property type="match status" value="1"/>
</dbReference>
<reference key="1">
    <citation type="journal article" date="2007" name="Proc. Natl. Acad. Sci. U.S.A.">
        <title>Deep-sea vent epsilon-proteobacterial genomes provide insights into emergence of pathogens.</title>
        <authorList>
            <person name="Nakagawa S."/>
            <person name="Takaki Y."/>
            <person name="Shimamura S."/>
            <person name="Reysenbach A.-L."/>
            <person name="Takai K."/>
            <person name="Horikoshi K."/>
        </authorList>
    </citation>
    <scope>NUCLEOTIDE SEQUENCE [LARGE SCALE GENOMIC DNA]</scope>
    <source>
        <strain>SB155-2</strain>
    </source>
</reference>
<gene>
    <name type="ordered locus">NIS_0137</name>
</gene>
<name>Y137_NITSB</name>
<protein>
    <recommendedName>
        <fullName evidence="1">UPF0178 protein NIS_0137</fullName>
    </recommendedName>
</protein>
<comment type="similarity">
    <text evidence="1">Belongs to the UPF0178 family.</text>
</comment>
<sequence>MTLFIDGDALPNILKPILLRSVERLKIPTKVIANKKIHIGDSPCIEMIIVSQGADRADDMIIELLSPEDLVITADIPLADRVITAGGHAIDHRGTRYSSDNIKHYLAMRNLFESIRESGEITNGPKPFTQKDAHAFANQLSAFLQRLEKRKK</sequence>
<keyword id="KW-1185">Reference proteome</keyword>
<organism>
    <name type="scientific">Nitratiruptor sp. (strain SB155-2)</name>
    <dbReference type="NCBI Taxonomy" id="387092"/>
    <lineage>
        <taxon>Bacteria</taxon>
        <taxon>Pseudomonadati</taxon>
        <taxon>Campylobacterota</taxon>
        <taxon>Epsilonproteobacteria</taxon>
        <taxon>Nautiliales</taxon>
        <taxon>Nitratiruptoraceae</taxon>
        <taxon>Nitratiruptor</taxon>
    </lineage>
</organism>
<feature type="chain" id="PRO_1000014428" description="UPF0178 protein NIS_0137">
    <location>
        <begin position="1"/>
        <end position="152"/>
    </location>
</feature>
<proteinExistence type="inferred from homology"/>
<evidence type="ECO:0000255" key="1">
    <source>
        <dbReference type="HAMAP-Rule" id="MF_00489"/>
    </source>
</evidence>
<accession>A6Q193</accession>